<sequence length="292" mass="32007">MPWLQLRINVTPEQAPAVESAALAAGAQAVTLEDNADQPIFEPALGETPLWSDTRITALFEADISTDETWQKVQNHYGEELPHHHWHVLEDKDWEREWIKNYHPIQCGPHFWICPSWLSPPDPNAINLLLDPGLAFGTGTHPTTFMCLEWLAQQDVKNLELIDYGCGSGILGIAGLLMGANSAVGVDIDPQALLATQENAVRNGLAKEAFPVFMPQRAPKEPVDMVLANILAGPLVELAPALIALVKSGGKICLSGVLGTQRTSIISAYEHAIEFTEVREKDEWICLAGIKK</sequence>
<reference key="1">
    <citation type="journal article" date="2008" name="PLoS Genet.">
        <title>Complete genome sequence of the complex carbohydrate-degrading marine bacterium, Saccharophagus degradans strain 2-40 T.</title>
        <authorList>
            <person name="Weiner R.M."/>
            <person name="Taylor L.E. II"/>
            <person name="Henrissat B."/>
            <person name="Hauser L."/>
            <person name="Land M."/>
            <person name="Coutinho P.M."/>
            <person name="Rancurel C."/>
            <person name="Saunders E.H."/>
            <person name="Longmire A.G."/>
            <person name="Zhang H."/>
            <person name="Bayer E.A."/>
            <person name="Gilbert H.J."/>
            <person name="Larimer F."/>
            <person name="Zhulin I.B."/>
            <person name="Ekborg N.A."/>
            <person name="Lamed R."/>
            <person name="Richardson P.M."/>
            <person name="Borovok I."/>
            <person name="Hutcheson S."/>
        </authorList>
    </citation>
    <scope>NUCLEOTIDE SEQUENCE [LARGE SCALE GENOMIC DNA]</scope>
    <source>
        <strain>2-40 / ATCC 43961 / DSM 17024</strain>
    </source>
</reference>
<gene>
    <name evidence="1" type="primary">prmA</name>
    <name type="ordered locus">Sde_0810</name>
</gene>
<protein>
    <recommendedName>
        <fullName evidence="1">Ribosomal protein L11 methyltransferase</fullName>
        <shortName evidence="1">L11 Mtase</shortName>
        <ecNumber evidence="1">2.1.1.-</ecNumber>
    </recommendedName>
</protein>
<name>PRMA_SACD2</name>
<feature type="chain" id="PRO_1000046080" description="Ribosomal protein L11 methyltransferase">
    <location>
        <begin position="1"/>
        <end position="292"/>
    </location>
</feature>
<feature type="binding site" evidence="1">
    <location>
        <position position="144"/>
    </location>
    <ligand>
        <name>S-adenosyl-L-methionine</name>
        <dbReference type="ChEBI" id="CHEBI:59789"/>
    </ligand>
</feature>
<feature type="binding site" evidence="1">
    <location>
        <position position="165"/>
    </location>
    <ligand>
        <name>S-adenosyl-L-methionine</name>
        <dbReference type="ChEBI" id="CHEBI:59789"/>
    </ligand>
</feature>
<feature type="binding site" evidence="1">
    <location>
        <position position="187"/>
    </location>
    <ligand>
        <name>S-adenosyl-L-methionine</name>
        <dbReference type="ChEBI" id="CHEBI:59789"/>
    </ligand>
</feature>
<feature type="binding site" evidence="1">
    <location>
        <position position="229"/>
    </location>
    <ligand>
        <name>S-adenosyl-L-methionine</name>
        <dbReference type="ChEBI" id="CHEBI:59789"/>
    </ligand>
</feature>
<dbReference type="EC" id="2.1.1.-" evidence="1"/>
<dbReference type="EMBL" id="CP000282">
    <property type="protein sequence ID" value="ABD80072.1"/>
    <property type="molecule type" value="Genomic_DNA"/>
</dbReference>
<dbReference type="RefSeq" id="WP_011467293.1">
    <property type="nucleotide sequence ID" value="NC_007912.1"/>
</dbReference>
<dbReference type="SMR" id="Q21MK7"/>
<dbReference type="STRING" id="203122.Sde_0810"/>
<dbReference type="GeneID" id="98612493"/>
<dbReference type="KEGG" id="sde:Sde_0810"/>
<dbReference type="eggNOG" id="COG2264">
    <property type="taxonomic scope" value="Bacteria"/>
</dbReference>
<dbReference type="HOGENOM" id="CLU_049382_4_1_6"/>
<dbReference type="OrthoDB" id="9785995at2"/>
<dbReference type="Proteomes" id="UP000001947">
    <property type="component" value="Chromosome"/>
</dbReference>
<dbReference type="GO" id="GO:0005829">
    <property type="term" value="C:cytosol"/>
    <property type="evidence" value="ECO:0007669"/>
    <property type="project" value="TreeGrafter"/>
</dbReference>
<dbReference type="GO" id="GO:0016279">
    <property type="term" value="F:protein-lysine N-methyltransferase activity"/>
    <property type="evidence" value="ECO:0007669"/>
    <property type="project" value="TreeGrafter"/>
</dbReference>
<dbReference type="GO" id="GO:0032259">
    <property type="term" value="P:methylation"/>
    <property type="evidence" value="ECO:0007669"/>
    <property type="project" value="UniProtKB-KW"/>
</dbReference>
<dbReference type="CDD" id="cd02440">
    <property type="entry name" value="AdoMet_MTases"/>
    <property type="match status" value="1"/>
</dbReference>
<dbReference type="Gene3D" id="3.40.50.150">
    <property type="entry name" value="Vaccinia Virus protein VP39"/>
    <property type="match status" value="1"/>
</dbReference>
<dbReference type="HAMAP" id="MF_00735">
    <property type="entry name" value="Methyltr_PrmA"/>
    <property type="match status" value="1"/>
</dbReference>
<dbReference type="InterPro" id="IPR050078">
    <property type="entry name" value="Ribosomal_L11_MeTrfase_PrmA"/>
</dbReference>
<dbReference type="InterPro" id="IPR004498">
    <property type="entry name" value="Ribosomal_PrmA_MeTrfase"/>
</dbReference>
<dbReference type="InterPro" id="IPR029063">
    <property type="entry name" value="SAM-dependent_MTases_sf"/>
</dbReference>
<dbReference type="NCBIfam" id="TIGR00406">
    <property type="entry name" value="prmA"/>
    <property type="match status" value="1"/>
</dbReference>
<dbReference type="PANTHER" id="PTHR43648">
    <property type="entry name" value="ELECTRON TRANSFER FLAVOPROTEIN BETA SUBUNIT LYSINE METHYLTRANSFERASE"/>
    <property type="match status" value="1"/>
</dbReference>
<dbReference type="PANTHER" id="PTHR43648:SF1">
    <property type="entry name" value="ELECTRON TRANSFER FLAVOPROTEIN BETA SUBUNIT LYSINE METHYLTRANSFERASE"/>
    <property type="match status" value="1"/>
</dbReference>
<dbReference type="Pfam" id="PF06325">
    <property type="entry name" value="PrmA"/>
    <property type="match status" value="1"/>
</dbReference>
<dbReference type="PIRSF" id="PIRSF000401">
    <property type="entry name" value="RPL11_MTase"/>
    <property type="match status" value="1"/>
</dbReference>
<dbReference type="SUPFAM" id="SSF53335">
    <property type="entry name" value="S-adenosyl-L-methionine-dependent methyltransferases"/>
    <property type="match status" value="1"/>
</dbReference>
<comment type="function">
    <text evidence="1">Methylates ribosomal protein L11.</text>
</comment>
<comment type="catalytic activity">
    <reaction evidence="1">
        <text>L-lysyl-[protein] + 3 S-adenosyl-L-methionine = N(6),N(6),N(6)-trimethyl-L-lysyl-[protein] + 3 S-adenosyl-L-homocysteine + 3 H(+)</text>
        <dbReference type="Rhea" id="RHEA:54192"/>
        <dbReference type="Rhea" id="RHEA-COMP:9752"/>
        <dbReference type="Rhea" id="RHEA-COMP:13826"/>
        <dbReference type="ChEBI" id="CHEBI:15378"/>
        <dbReference type="ChEBI" id="CHEBI:29969"/>
        <dbReference type="ChEBI" id="CHEBI:57856"/>
        <dbReference type="ChEBI" id="CHEBI:59789"/>
        <dbReference type="ChEBI" id="CHEBI:61961"/>
    </reaction>
</comment>
<comment type="subcellular location">
    <subcellularLocation>
        <location evidence="1">Cytoplasm</location>
    </subcellularLocation>
</comment>
<comment type="similarity">
    <text evidence="1">Belongs to the methyltransferase superfamily. PrmA family.</text>
</comment>
<organism>
    <name type="scientific">Saccharophagus degradans (strain 2-40 / ATCC 43961 / DSM 17024)</name>
    <dbReference type="NCBI Taxonomy" id="203122"/>
    <lineage>
        <taxon>Bacteria</taxon>
        <taxon>Pseudomonadati</taxon>
        <taxon>Pseudomonadota</taxon>
        <taxon>Gammaproteobacteria</taxon>
        <taxon>Cellvibrionales</taxon>
        <taxon>Cellvibrionaceae</taxon>
        <taxon>Saccharophagus</taxon>
    </lineage>
</organism>
<proteinExistence type="inferred from homology"/>
<keyword id="KW-0963">Cytoplasm</keyword>
<keyword id="KW-0489">Methyltransferase</keyword>
<keyword id="KW-1185">Reference proteome</keyword>
<keyword id="KW-0949">S-adenosyl-L-methionine</keyword>
<keyword id="KW-0808">Transferase</keyword>
<evidence type="ECO:0000255" key="1">
    <source>
        <dbReference type="HAMAP-Rule" id="MF_00735"/>
    </source>
</evidence>
<accession>Q21MK7</accession>